<sequence>MSLTRLLIRDFRNIETADLALSPGFNFLVGANGSGKTSVLEAIYTLGHGRAFRSLQIGRVIRHEQEAFVLHGRLQGEERETAIGLTKDKQGDSKVRIDGTDGHKVAELAHLMPMQLITPEGFTLLNGGPKYRRAFLDWGCFHNEPGFFTAWSNLKRLLKQRNAALRQVTRYEQLRPWDKELIPLAEQISTWRAEYSAGIAADMADTCKQFLPEFSLTFSFQRGWEKETEYAEVLERNFERDRQLTYTAHGPHKADLRIRADGAPVEDTLSRGQLKLLMCALRLAQGEFLTRESGRRCLYLIDDFASELDDERRGLLASRLKATQSQVFVSAISAEHVIDMSDENSKMFTVEKGKITD</sequence>
<protein>
    <recommendedName>
        <fullName evidence="1">DNA replication and repair protein RecF</fullName>
    </recommendedName>
</protein>
<gene>
    <name evidence="1" type="primary">recF</name>
    <name type="ordered locus">EcE24377A_4210</name>
</gene>
<feature type="chain" id="PRO_1000059901" description="DNA replication and repair protein RecF">
    <location>
        <begin position="1"/>
        <end position="357"/>
    </location>
</feature>
<feature type="binding site" evidence="1">
    <location>
        <begin position="30"/>
        <end position="37"/>
    </location>
    <ligand>
        <name>ATP</name>
        <dbReference type="ChEBI" id="CHEBI:30616"/>
    </ligand>
</feature>
<evidence type="ECO:0000255" key="1">
    <source>
        <dbReference type="HAMAP-Rule" id="MF_00365"/>
    </source>
</evidence>
<reference key="1">
    <citation type="journal article" date="2008" name="J. Bacteriol.">
        <title>The pangenome structure of Escherichia coli: comparative genomic analysis of E. coli commensal and pathogenic isolates.</title>
        <authorList>
            <person name="Rasko D.A."/>
            <person name="Rosovitz M.J."/>
            <person name="Myers G.S.A."/>
            <person name="Mongodin E.F."/>
            <person name="Fricke W.F."/>
            <person name="Gajer P."/>
            <person name="Crabtree J."/>
            <person name="Sebaihia M."/>
            <person name="Thomson N.R."/>
            <person name="Chaudhuri R."/>
            <person name="Henderson I.R."/>
            <person name="Sperandio V."/>
            <person name="Ravel J."/>
        </authorList>
    </citation>
    <scope>NUCLEOTIDE SEQUENCE [LARGE SCALE GENOMIC DNA]</scope>
    <source>
        <strain>E24377A / ETEC</strain>
    </source>
</reference>
<dbReference type="EMBL" id="CP000800">
    <property type="protein sequence ID" value="ABV17727.1"/>
    <property type="molecule type" value="Genomic_DNA"/>
</dbReference>
<dbReference type="RefSeq" id="WP_000060112.1">
    <property type="nucleotide sequence ID" value="NC_009801.1"/>
</dbReference>
<dbReference type="SMR" id="A7ZTQ6"/>
<dbReference type="GeneID" id="93778441"/>
<dbReference type="KEGG" id="ecw:EcE24377A_4210"/>
<dbReference type="HOGENOM" id="CLU_040267_0_0_6"/>
<dbReference type="Proteomes" id="UP000001122">
    <property type="component" value="Chromosome"/>
</dbReference>
<dbReference type="GO" id="GO:0005737">
    <property type="term" value="C:cytoplasm"/>
    <property type="evidence" value="ECO:0007669"/>
    <property type="project" value="UniProtKB-SubCell"/>
</dbReference>
<dbReference type="GO" id="GO:0005524">
    <property type="term" value="F:ATP binding"/>
    <property type="evidence" value="ECO:0007669"/>
    <property type="project" value="UniProtKB-UniRule"/>
</dbReference>
<dbReference type="GO" id="GO:0003697">
    <property type="term" value="F:single-stranded DNA binding"/>
    <property type="evidence" value="ECO:0007669"/>
    <property type="project" value="UniProtKB-UniRule"/>
</dbReference>
<dbReference type="GO" id="GO:0006260">
    <property type="term" value="P:DNA replication"/>
    <property type="evidence" value="ECO:0007669"/>
    <property type="project" value="UniProtKB-UniRule"/>
</dbReference>
<dbReference type="GO" id="GO:0000731">
    <property type="term" value="P:DNA synthesis involved in DNA repair"/>
    <property type="evidence" value="ECO:0007669"/>
    <property type="project" value="TreeGrafter"/>
</dbReference>
<dbReference type="GO" id="GO:0006302">
    <property type="term" value="P:double-strand break repair"/>
    <property type="evidence" value="ECO:0007669"/>
    <property type="project" value="TreeGrafter"/>
</dbReference>
<dbReference type="GO" id="GO:0009432">
    <property type="term" value="P:SOS response"/>
    <property type="evidence" value="ECO:0007669"/>
    <property type="project" value="UniProtKB-UniRule"/>
</dbReference>
<dbReference type="FunFam" id="1.20.1050.90:FF:000001">
    <property type="entry name" value="DNA replication and repair protein RecF"/>
    <property type="match status" value="1"/>
</dbReference>
<dbReference type="Gene3D" id="3.40.50.300">
    <property type="entry name" value="P-loop containing nucleotide triphosphate hydrolases"/>
    <property type="match status" value="1"/>
</dbReference>
<dbReference type="Gene3D" id="1.20.1050.90">
    <property type="entry name" value="RecF/RecN/SMC, N-terminal domain"/>
    <property type="match status" value="1"/>
</dbReference>
<dbReference type="HAMAP" id="MF_00365">
    <property type="entry name" value="RecF"/>
    <property type="match status" value="1"/>
</dbReference>
<dbReference type="InterPro" id="IPR001238">
    <property type="entry name" value="DNA-binding_RecF"/>
</dbReference>
<dbReference type="InterPro" id="IPR018078">
    <property type="entry name" value="DNA-binding_RecF_CS"/>
</dbReference>
<dbReference type="InterPro" id="IPR027417">
    <property type="entry name" value="P-loop_NTPase"/>
</dbReference>
<dbReference type="InterPro" id="IPR003395">
    <property type="entry name" value="RecF/RecN/SMC_N"/>
</dbReference>
<dbReference type="InterPro" id="IPR042174">
    <property type="entry name" value="RecF_2"/>
</dbReference>
<dbReference type="NCBIfam" id="TIGR00611">
    <property type="entry name" value="recf"/>
    <property type="match status" value="1"/>
</dbReference>
<dbReference type="PANTHER" id="PTHR32182">
    <property type="entry name" value="DNA REPLICATION AND REPAIR PROTEIN RECF"/>
    <property type="match status" value="1"/>
</dbReference>
<dbReference type="PANTHER" id="PTHR32182:SF0">
    <property type="entry name" value="DNA REPLICATION AND REPAIR PROTEIN RECF"/>
    <property type="match status" value="1"/>
</dbReference>
<dbReference type="Pfam" id="PF02463">
    <property type="entry name" value="SMC_N"/>
    <property type="match status" value="1"/>
</dbReference>
<dbReference type="SUPFAM" id="SSF52540">
    <property type="entry name" value="P-loop containing nucleoside triphosphate hydrolases"/>
    <property type="match status" value="1"/>
</dbReference>
<dbReference type="PROSITE" id="PS00617">
    <property type="entry name" value="RECF_1"/>
    <property type="match status" value="1"/>
</dbReference>
<dbReference type="PROSITE" id="PS00618">
    <property type="entry name" value="RECF_2"/>
    <property type="match status" value="1"/>
</dbReference>
<comment type="function">
    <text evidence="1">The RecF protein is involved in DNA metabolism; it is required for DNA replication and normal SOS inducibility. RecF binds preferentially to single-stranded, linear DNA. It also seems to bind ATP.</text>
</comment>
<comment type="subcellular location">
    <subcellularLocation>
        <location evidence="1">Cytoplasm</location>
    </subcellularLocation>
</comment>
<comment type="similarity">
    <text evidence="1">Belongs to the RecF family.</text>
</comment>
<proteinExistence type="inferred from homology"/>
<accession>A7ZTQ6</accession>
<organism>
    <name type="scientific">Escherichia coli O139:H28 (strain E24377A / ETEC)</name>
    <dbReference type="NCBI Taxonomy" id="331111"/>
    <lineage>
        <taxon>Bacteria</taxon>
        <taxon>Pseudomonadati</taxon>
        <taxon>Pseudomonadota</taxon>
        <taxon>Gammaproteobacteria</taxon>
        <taxon>Enterobacterales</taxon>
        <taxon>Enterobacteriaceae</taxon>
        <taxon>Escherichia</taxon>
    </lineage>
</organism>
<name>RECF_ECO24</name>
<keyword id="KW-0067">ATP-binding</keyword>
<keyword id="KW-0963">Cytoplasm</keyword>
<keyword id="KW-0227">DNA damage</keyword>
<keyword id="KW-0234">DNA repair</keyword>
<keyword id="KW-0235">DNA replication</keyword>
<keyword id="KW-0238">DNA-binding</keyword>
<keyword id="KW-0547">Nucleotide-binding</keyword>
<keyword id="KW-1185">Reference proteome</keyword>
<keyword id="KW-0742">SOS response</keyword>